<proteinExistence type="evidence at protein level"/>
<accession>A0A0G2QC33</accession>
<accession>F1LRG2</accession>
<accession>Q4KM36</accession>
<dbReference type="EC" id="3.4.22.-" evidence="2"/>
<dbReference type="EMBL" id="AC109427">
    <property type="status" value="NOT_ANNOTATED_CDS"/>
    <property type="molecule type" value="Genomic_DNA"/>
</dbReference>
<dbReference type="EMBL" id="BC098833">
    <property type="protein sequence ID" value="AAH98833.1"/>
    <property type="molecule type" value="mRNA"/>
</dbReference>
<dbReference type="RefSeq" id="NP_001020882.1">
    <property type="nucleotide sequence ID" value="NM_001025711.1"/>
</dbReference>
<dbReference type="RefSeq" id="NP_001386126.1">
    <molecule id="A0A0G2QC33-1"/>
    <property type="nucleotide sequence ID" value="NM_001399197.1"/>
</dbReference>
<dbReference type="RefSeq" id="XP_006245595.1">
    <property type="nucleotide sequence ID" value="XM_006245533.3"/>
</dbReference>
<dbReference type="RefSeq" id="XP_038939702.1">
    <molecule id="A0A0G2QC33-2"/>
    <property type="nucleotide sequence ID" value="XM_039083774.2"/>
</dbReference>
<dbReference type="RefSeq" id="XP_038939703.1">
    <molecule id="A0A0G2QC33-2"/>
    <property type="nucleotide sequence ID" value="XM_039083775.1"/>
</dbReference>
<dbReference type="SMR" id="A0A0G2QC33"/>
<dbReference type="FunCoup" id="A0A0G2QC33">
    <property type="interactions" value="2416"/>
</dbReference>
<dbReference type="STRING" id="10116.ENSRNOP00000025529"/>
<dbReference type="MEROPS" id="C54.003"/>
<dbReference type="GlyGen" id="A0A0G2QC33">
    <property type="glycosylation" value="1 site"/>
</dbReference>
<dbReference type="iPTMnet" id="A0A0G2QC33"/>
<dbReference type="PhosphoSitePlus" id="A0A0G2QC33"/>
<dbReference type="jPOST" id="A0A0G2QC33"/>
<dbReference type="PaxDb" id="10116-ENSRNOP00000025529"/>
<dbReference type="Ensembl" id="ENSRNOT00000025529.8">
    <molecule id="A0A0G2QC33-1"/>
    <property type="protein sequence ID" value="ENSRNOP00000025529.6"/>
    <property type="gene ID" value="ENSRNOG00000018403.8"/>
</dbReference>
<dbReference type="GeneID" id="316640"/>
<dbReference type="AGR" id="RGD:1309664"/>
<dbReference type="RGD" id="1309664">
    <property type="gene designation" value="Atg4b"/>
</dbReference>
<dbReference type="eggNOG" id="KOG2674">
    <property type="taxonomic scope" value="Eukaryota"/>
</dbReference>
<dbReference type="GeneTree" id="ENSGT00530000063000"/>
<dbReference type="HOGENOM" id="CLU_021259_0_1_1"/>
<dbReference type="InParanoid" id="A0A0G2QC33"/>
<dbReference type="TreeFam" id="TF314847"/>
<dbReference type="Reactome" id="R-RNO-1632852">
    <property type="pathway name" value="Macroautophagy"/>
</dbReference>
<dbReference type="PRO" id="PR:A0A0G2QC33"/>
<dbReference type="Proteomes" id="UP000002494">
    <property type="component" value="Chromosome 9"/>
</dbReference>
<dbReference type="Bgee" id="ENSRNOG00000018403">
    <property type="expression patterns" value="Expressed in thymus and 20 other cell types or tissues"/>
</dbReference>
<dbReference type="GO" id="GO:0000421">
    <property type="term" value="C:autophagosome membrane"/>
    <property type="evidence" value="ECO:0000266"/>
    <property type="project" value="RGD"/>
</dbReference>
<dbReference type="GO" id="GO:0005737">
    <property type="term" value="C:cytoplasm"/>
    <property type="evidence" value="ECO:0000266"/>
    <property type="project" value="RGD"/>
</dbReference>
<dbReference type="GO" id="GO:0031410">
    <property type="term" value="C:cytoplasmic vesicle"/>
    <property type="evidence" value="ECO:0007669"/>
    <property type="project" value="UniProtKB-KW"/>
</dbReference>
<dbReference type="GO" id="GO:0005829">
    <property type="term" value="C:cytosol"/>
    <property type="evidence" value="ECO:0007669"/>
    <property type="project" value="UniProtKB-SubCell"/>
</dbReference>
<dbReference type="GO" id="GO:0005783">
    <property type="term" value="C:endoplasmic reticulum"/>
    <property type="evidence" value="ECO:0007669"/>
    <property type="project" value="UniProtKB-SubCell"/>
</dbReference>
<dbReference type="GO" id="GO:0005739">
    <property type="term" value="C:mitochondrion"/>
    <property type="evidence" value="ECO:0007669"/>
    <property type="project" value="UniProtKB-SubCell"/>
</dbReference>
<dbReference type="GO" id="GO:0004197">
    <property type="term" value="F:cysteine-type endopeptidase activity"/>
    <property type="evidence" value="ECO:0000266"/>
    <property type="project" value="RGD"/>
</dbReference>
<dbReference type="GO" id="GO:0008234">
    <property type="term" value="F:cysteine-type peptidase activity"/>
    <property type="evidence" value="ECO:0000266"/>
    <property type="project" value="RGD"/>
</dbReference>
<dbReference type="GO" id="GO:0004175">
    <property type="term" value="F:endopeptidase activity"/>
    <property type="evidence" value="ECO:0000266"/>
    <property type="project" value="RGD"/>
</dbReference>
<dbReference type="GO" id="GO:0008233">
    <property type="term" value="F:peptidase activity"/>
    <property type="evidence" value="ECO:0000266"/>
    <property type="project" value="RGD"/>
</dbReference>
<dbReference type="GO" id="GO:0019786">
    <property type="term" value="F:protein-phosphatidylethanolamide deconjugating activity"/>
    <property type="evidence" value="ECO:0000266"/>
    <property type="project" value="RGD"/>
</dbReference>
<dbReference type="GO" id="GO:0097110">
    <property type="term" value="F:scaffold protein binding"/>
    <property type="evidence" value="ECO:0000266"/>
    <property type="project" value="RGD"/>
</dbReference>
<dbReference type="GO" id="GO:0035973">
    <property type="term" value="P:aggrephagy"/>
    <property type="evidence" value="ECO:0000318"/>
    <property type="project" value="GO_Central"/>
</dbReference>
<dbReference type="GO" id="GO:0000045">
    <property type="term" value="P:autophagosome assembly"/>
    <property type="evidence" value="ECO:0000266"/>
    <property type="project" value="RGD"/>
</dbReference>
<dbReference type="GO" id="GO:0006914">
    <property type="term" value="P:autophagy"/>
    <property type="evidence" value="ECO:0000266"/>
    <property type="project" value="RGD"/>
</dbReference>
<dbReference type="GO" id="GO:0009267">
    <property type="term" value="P:cellular response to starvation"/>
    <property type="evidence" value="ECO:0000266"/>
    <property type="project" value="RGD"/>
</dbReference>
<dbReference type="GO" id="GO:0016237">
    <property type="term" value="P:microautophagy"/>
    <property type="evidence" value="ECO:0000266"/>
    <property type="project" value="RGD"/>
</dbReference>
<dbReference type="GO" id="GO:0000423">
    <property type="term" value="P:mitophagy"/>
    <property type="evidence" value="ECO:0000266"/>
    <property type="project" value="RGD"/>
</dbReference>
<dbReference type="GO" id="GO:0031173">
    <property type="term" value="P:otolith mineralization completed early in development"/>
    <property type="evidence" value="ECO:0000266"/>
    <property type="project" value="RGD"/>
</dbReference>
<dbReference type="GO" id="GO:0034727">
    <property type="term" value="P:piecemeal microautophagy of the nucleus"/>
    <property type="evidence" value="ECO:0000318"/>
    <property type="project" value="GO_Central"/>
</dbReference>
<dbReference type="GO" id="GO:0045732">
    <property type="term" value="P:positive regulation of protein catabolic process"/>
    <property type="evidence" value="ECO:0000315"/>
    <property type="project" value="RGD"/>
</dbReference>
<dbReference type="GO" id="GO:0034497">
    <property type="term" value="P:protein localization to phagophore assembly site"/>
    <property type="evidence" value="ECO:0000266"/>
    <property type="project" value="RGD"/>
</dbReference>
<dbReference type="GO" id="GO:0016485">
    <property type="term" value="P:protein processing"/>
    <property type="evidence" value="ECO:0000318"/>
    <property type="project" value="GO_Central"/>
</dbReference>
<dbReference type="GO" id="GO:0015031">
    <property type="term" value="P:protein transport"/>
    <property type="evidence" value="ECO:0007669"/>
    <property type="project" value="UniProtKB-KW"/>
</dbReference>
<dbReference type="GO" id="GO:0006508">
    <property type="term" value="P:proteolysis"/>
    <property type="evidence" value="ECO:0000266"/>
    <property type="project" value="RGD"/>
</dbReference>
<dbReference type="InterPro" id="IPR046793">
    <property type="entry name" value="ATG4_LIR"/>
</dbReference>
<dbReference type="InterPro" id="IPR038765">
    <property type="entry name" value="Papain-like_cys_pep_sf"/>
</dbReference>
<dbReference type="InterPro" id="IPR005078">
    <property type="entry name" value="Peptidase_C54"/>
</dbReference>
<dbReference type="InterPro" id="IPR046792">
    <property type="entry name" value="Peptidase_C54_cat"/>
</dbReference>
<dbReference type="PANTHER" id="PTHR22624">
    <property type="entry name" value="CYSTEINE PROTEASE ATG4"/>
    <property type="match status" value="1"/>
</dbReference>
<dbReference type="PANTHER" id="PTHR22624:SF39">
    <property type="entry name" value="CYSTEINE PROTEASE ATG4B"/>
    <property type="match status" value="1"/>
</dbReference>
<dbReference type="Pfam" id="PF20166">
    <property type="entry name" value="ATG4_LIR"/>
    <property type="match status" value="1"/>
</dbReference>
<dbReference type="Pfam" id="PF03416">
    <property type="entry name" value="Peptidase_C54"/>
    <property type="match status" value="1"/>
</dbReference>
<dbReference type="SUPFAM" id="SSF54001">
    <property type="entry name" value="Cysteine proteinases"/>
    <property type="match status" value="1"/>
</dbReference>
<reference key="1">
    <citation type="journal article" date="2004" name="Nature">
        <title>Genome sequence of the Brown Norway rat yields insights into mammalian evolution.</title>
        <authorList>
            <person name="Gibbs R.A."/>
            <person name="Weinstock G.M."/>
            <person name="Metzker M.L."/>
            <person name="Muzny D.M."/>
            <person name="Sodergren E.J."/>
            <person name="Scherer S."/>
            <person name="Scott G."/>
            <person name="Steffen D."/>
            <person name="Worley K.C."/>
            <person name="Burch P.E."/>
            <person name="Okwuonu G."/>
            <person name="Hines S."/>
            <person name="Lewis L."/>
            <person name="Deramo C."/>
            <person name="Delgado O."/>
            <person name="Dugan-Rocha S."/>
            <person name="Miner G."/>
            <person name="Morgan M."/>
            <person name="Hawes A."/>
            <person name="Gill R."/>
            <person name="Holt R.A."/>
            <person name="Adams M.D."/>
            <person name="Amanatides P.G."/>
            <person name="Baden-Tillson H."/>
            <person name="Barnstead M."/>
            <person name="Chin S."/>
            <person name="Evans C.A."/>
            <person name="Ferriera S."/>
            <person name="Fosler C."/>
            <person name="Glodek A."/>
            <person name="Gu Z."/>
            <person name="Jennings D."/>
            <person name="Kraft C.L."/>
            <person name="Nguyen T."/>
            <person name="Pfannkoch C.M."/>
            <person name="Sitter C."/>
            <person name="Sutton G.G."/>
            <person name="Venter J.C."/>
            <person name="Woodage T."/>
            <person name="Smith D."/>
            <person name="Lee H.-M."/>
            <person name="Gustafson E."/>
            <person name="Cahill P."/>
            <person name="Kana A."/>
            <person name="Doucette-Stamm L."/>
            <person name="Weinstock K."/>
            <person name="Fechtel K."/>
            <person name="Weiss R.B."/>
            <person name="Dunn D.M."/>
            <person name="Green E.D."/>
            <person name="Blakesley R.W."/>
            <person name="Bouffard G.G."/>
            <person name="De Jong P.J."/>
            <person name="Osoegawa K."/>
            <person name="Zhu B."/>
            <person name="Marra M."/>
            <person name="Schein J."/>
            <person name="Bosdet I."/>
            <person name="Fjell C."/>
            <person name="Jones S."/>
            <person name="Krzywinski M."/>
            <person name="Mathewson C."/>
            <person name="Siddiqui A."/>
            <person name="Wye N."/>
            <person name="McPherson J."/>
            <person name="Zhao S."/>
            <person name="Fraser C.M."/>
            <person name="Shetty J."/>
            <person name="Shatsman S."/>
            <person name="Geer K."/>
            <person name="Chen Y."/>
            <person name="Abramzon S."/>
            <person name="Nierman W.C."/>
            <person name="Havlak P.H."/>
            <person name="Chen R."/>
            <person name="Durbin K.J."/>
            <person name="Egan A."/>
            <person name="Ren Y."/>
            <person name="Song X.-Z."/>
            <person name="Li B."/>
            <person name="Liu Y."/>
            <person name="Qin X."/>
            <person name="Cawley S."/>
            <person name="Cooney A.J."/>
            <person name="D'Souza L.M."/>
            <person name="Martin K."/>
            <person name="Wu J.Q."/>
            <person name="Gonzalez-Garay M.L."/>
            <person name="Jackson A.R."/>
            <person name="Kalafus K.J."/>
            <person name="McLeod M.P."/>
            <person name="Milosavljevic A."/>
            <person name="Virk D."/>
            <person name="Volkov A."/>
            <person name="Wheeler D.A."/>
            <person name="Zhang Z."/>
            <person name="Bailey J.A."/>
            <person name="Eichler E.E."/>
            <person name="Tuzun E."/>
            <person name="Birney E."/>
            <person name="Mongin E."/>
            <person name="Ureta-Vidal A."/>
            <person name="Woodwark C."/>
            <person name="Zdobnov E."/>
            <person name="Bork P."/>
            <person name="Suyama M."/>
            <person name="Torrents D."/>
            <person name="Alexandersson M."/>
            <person name="Trask B.J."/>
            <person name="Young J.M."/>
            <person name="Huang H."/>
            <person name="Wang H."/>
            <person name="Xing H."/>
            <person name="Daniels S."/>
            <person name="Gietzen D."/>
            <person name="Schmidt J."/>
            <person name="Stevens K."/>
            <person name="Vitt U."/>
            <person name="Wingrove J."/>
            <person name="Camara F."/>
            <person name="Mar Alba M."/>
            <person name="Abril J.F."/>
            <person name="Guigo R."/>
            <person name="Smit A."/>
            <person name="Dubchak I."/>
            <person name="Rubin E.M."/>
            <person name="Couronne O."/>
            <person name="Poliakov A."/>
            <person name="Huebner N."/>
            <person name="Ganten D."/>
            <person name="Goesele C."/>
            <person name="Hummel O."/>
            <person name="Kreitler T."/>
            <person name="Lee Y.-A."/>
            <person name="Monti J."/>
            <person name="Schulz H."/>
            <person name="Zimdahl H."/>
            <person name="Himmelbauer H."/>
            <person name="Lehrach H."/>
            <person name="Jacob H.J."/>
            <person name="Bromberg S."/>
            <person name="Gullings-Handley J."/>
            <person name="Jensen-Seaman M.I."/>
            <person name="Kwitek A.E."/>
            <person name="Lazar J."/>
            <person name="Pasko D."/>
            <person name="Tonellato P.J."/>
            <person name="Twigger S."/>
            <person name="Ponting C.P."/>
            <person name="Duarte J.M."/>
            <person name="Rice S."/>
            <person name="Goodstadt L."/>
            <person name="Beatson S.A."/>
            <person name="Emes R.D."/>
            <person name="Winter E.E."/>
            <person name="Webber C."/>
            <person name="Brandt P."/>
            <person name="Nyakatura G."/>
            <person name="Adetobi M."/>
            <person name="Chiaromonte F."/>
            <person name="Elnitski L."/>
            <person name="Eswara P."/>
            <person name="Hardison R.C."/>
            <person name="Hou M."/>
            <person name="Kolbe D."/>
            <person name="Makova K."/>
            <person name="Miller W."/>
            <person name="Nekrutenko A."/>
            <person name="Riemer C."/>
            <person name="Schwartz S."/>
            <person name="Taylor J."/>
            <person name="Yang S."/>
            <person name="Zhang Y."/>
            <person name="Lindpaintner K."/>
            <person name="Andrews T.D."/>
            <person name="Caccamo M."/>
            <person name="Clamp M."/>
            <person name="Clarke L."/>
            <person name="Curwen V."/>
            <person name="Durbin R.M."/>
            <person name="Eyras E."/>
            <person name="Searle S.M."/>
            <person name="Cooper G.M."/>
            <person name="Batzoglou S."/>
            <person name="Brudno M."/>
            <person name="Sidow A."/>
            <person name="Stone E.A."/>
            <person name="Payseur B.A."/>
            <person name="Bourque G."/>
            <person name="Lopez-Otin C."/>
            <person name="Puente X.S."/>
            <person name="Chakrabarti K."/>
            <person name="Chatterji S."/>
            <person name="Dewey C."/>
            <person name="Pachter L."/>
            <person name="Bray N."/>
            <person name="Yap V.B."/>
            <person name="Caspi A."/>
            <person name="Tesler G."/>
            <person name="Pevzner P.A."/>
            <person name="Haussler D."/>
            <person name="Roskin K.M."/>
            <person name="Baertsch R."/>
            <person name="Clawson H."/>
            <person name="Furey T.S."/>
            <person name="Hinrichs A.S."/>
            <person name="Karolchik D."/>
            <person name="Kent W.J."/>
            <person name="Rosenbloom K.R."/>
            <person name="Trumbower H."/>
            <person name="Weirauch M."/>
            <person name="Cooper D.N."/>
            <person name="Stenson P.D."/>
            <person name="Ma B."/>
            <person name="Brent M."/>
            <person name="Arumugam M."/>
            <person name="Shteynberg D."/>
            <person name="Copley R.R."/>
            <person name="Taylor M.S."/>
            <person name="Riethman H."/>
            <person name="Mudunuri U."/>
            <person name="Peterson J."/>
            <person name="Guyer M."/>
            <person name="Felsenfeld A."/>
            <person name="Old S."/>
            <person name="Mockrin S."/>
            <person name="Collins F.S."/>
        </authorList>
    </citation>
    <scope>NUCLEOTIDE SEQUENCE [LARGE SCALE GENOMIC DNA]</scope>
    <source>
        <strain>Brown Norway</strain>
    </source>
</reference>
<reference key="2">
    <citation type="journal article" date="2004" name="Genome Res.">
        <title>The status, quality, and expansion of the NIH full-length cDNA project: the Mammalian Gene Collection (MGC).</title>
        <authorList>
            <consortium name="The MGC Project Team"/>
        </authorList>
    </citation>
    <scope>NUCLEOTIDE SEQUENCE [LARGE SCALE MRNA] (ISOFORM 2)</scope>
    <source>
        <tissue>Spleen</tissue>
    </source>
</reference>
<reference evidence="6" key="3">
    <citation type="journal article" date="2012" name="Nat. Commun.">
        <title>Quantitative maps of protein phosphorylation sites across 14 different rat organs and tissues.</title>
        <authorList>
            <person name="Lundby A."/>
            <person name="Secher A."/>
            <person name="Lage K."/>
            <person name="Nordsborg N.B."/>
            <person name="Dmytriyev A."/>
            <person name="Lundby C."/>
            <person name="Olsen J.V."/>
        </authorList>
    </citation>
    <scope>IDENTIFICATION BY MASS SPECTROMETRY [LARGE SCALE ANALYSIS]</scope>
</reference>
<reference key="4">
    <citation type="journal article" date="2017" name="Autophagy">
        <title>Autophagy impairment mediated by S-nitrosation of ATG4B leads to neurotoxicity in response to hyperglycemia.</title>
        <authorList>
            <person name="Li Y."/>
            <person name="Zhang Y."/>
            <person name="Wang L."/>
            <person name="Wang P."/>
            <person name="Xue Y."/>
            <person name="Li X."/>
            <person name="Qiao X."/>
            <person name="Zhang X."/>
            <person name="Xu T."/>
            <person name="Liu G."/>
            <person name="Li P."/>
            <person name="Chen C."/>
        </authorList>
    </citation>
    <scope>S-NITROSYLATION</scope>
</reference>
<name>ATG4B_RAT</name>
<protein>
    <recommendedName>
        <fullName evidence="4">Cysteine protease ATG4B</fullName>
        <ecNumber evidence="2">3.4.22.-</ecNumber>
    </recommendedName>
    <alternativeName>
        <fullName>Autophagy-related protein 4 homolog B</fullName>
    </alternativeName>
</protein>
<keyword id="KW-0007">Acetylation</keyword>
<keyword id="KW-0025">Alternative splicing</keyword>
<keyword id="KW-0072">Autophagy</keyword>
<keyword id="KW-0963">Cytoplasm</keyword>
<keyword id="KW-0968">Cytoplasmic vesicle</keyword>
<keyword id="KW-1015">Disulfide bond</keyword>
<keyword id="KW-0256">Endoplasmic reticulum</keyword>
<keyword id="KW-0325">Glycoprotein</keyword>
<keyword id="KW-0378">Hydrolase</keyword>
<keyword id="KW-1017">Isopeptide bond</keyword>
<keyword id="KW-0496">Mitochondrion</keyword>
<keyword id="KW-0597">Phosphoprotein</keyword>
<keyword id="KW-0645">Protease</keyword>
<keyword id="KW-0653">Protein transport</keyword>
<keyword id="KW-1185">Reference proteome</keyword>
<keyword id="KW-0702">S-nitrosylation</keyword>
<keyword id="KW-0788">Thiol protease</keyword>
<keyword id="KW-0813">Transport</keyword>
<keyword id="KW-0832">Ubl conjugation</keyword>
<keyword id="KW-0833">Ubl conjugation pathway</keyword>
<evidence type="ECO:0000250" key="1">
    <source>
        <dbReference type="UniProtKB" id="Q8BGE6"/>
    </source>
</evidence>
<evidence type="ECO:0000250" key="2">
    <source>
        <dbReference type="UniProtKB" id="Q9Y4P1"/>
    </source>
</evidence>
<evidence type="ECO:0000269" key="3">
    <source>
    </source>
</evidence>
<evidence type="ECO:0000305" key="4"/>
<evidence type="ECO:0000312" key="5">
    <source>
        <dbReference type="RGD" id="1309664"/>
    </source>
</evidence>
<evidence type="ECO:0007744" key="6">
    <source>
    </source>
</evidence>
<sequence length="393" mass="44364">MDAATLTYDTLRFAEFEDFPETSEPVWILGRKYSIFTEKDEILSDVASRLWFTYRRNFPAIGGTGPTSDTGWGCMLRCGQMIFAQALVCRHLGRDWRWTQRKRQPDSYFSVLNAFLDRKDSYYSIHQIAQMGVGEGKSIGQWYGPNTVAQVLKKLAVFDTWSSLAVHIAMDNTVVMEEIRRLCRASLPCAGAAALSMESERHCNGLPAGAEVTNRPLAWRPLVLLIPLRLGLTDINEAYVETLKHCFMMPQSLGVIGGKPNSAHYFIGYVGEELIYLDPHTTQPAVELTDSCFIPDESFHCQHPPCRMGIGELDPSIAVGFFCKTEEDFNDWCQQVKKLSQLGGALPMFELVEQQPSHLACQDVLNLSLDSSDVERLERFFDSEDEDFEILSL</sequence>
<feature type="chain" id="PRO_0000454234" description="Cysteine protease ATG4B">
    <location>
        <begin position="1"/>
        <end position="393"/>
    </location>
</feature>
<feature type="short sequence motif" description="LIR" evidence="2">
    <location>
        <begin position="388"/>
        <end position="391"/>
    </location>
</feature>
<feature type="active site" description="Nucleophile" evidence="2">
    <location>
        <position position="74"/>
    </location>
</feature>
<feature type="active site" evidence="2">
    <location>
        <position position="278"/>
    </location>
</feature>
<feature type="active site" evidence="2">
    <location>
        <position position="280"/>
    </location>
</feature>
<feature type="modified residue" description="N-acetylmethionine" evidence="2">
    <location>
        <position position="1"/>
    </location>
</feature>
<feature type="modified residue" description="Phosphoserine" evidence="2">
    <location>
        <position position="34"/>
    </location>
</feature>
<feature type="modified residue" description="S-nitrosocysteine" evidence="2">
    <location>
        <position position="189"/>
    </location>
</feature>
<feature type="modified residue" description="S-nitrosocysteine" evidence="2">
    <location>
        <position position="292"/>
    </location>
</feature>
<feature type="modified residue" description="S-nitrosocysteine" evidence="2">
    <location>
        <position position="301"/>
    </location>
</feature>
<feature type="modified residue" description="Phosphoserine" evidence="2">
    <location>
        <position position="316"/>
    </location>
</feature>
<feature type="modified residue" description="Phosphoserine" evidence="2">
    <location>
        <position position="383"/>
    </location>
</feature>
<feature type="modified residue" description="Phosphoserine" evidence="2">
    <location>
        <position position="392"/>
    </location>
</feature>
<feature type="disulfide bond" evidence="2">
    <location>
        <begin position="292"/>
        <end position="361"/>
    </location>
</feature>
<feature type="disulfide bond" description="Interchain (with C-361)" evidence="2">
    <location>
        <position position="292"/>
    </location>
</feature>
<feature type="disulfide bond" description="Interchain (with C-292)" evidence="2">
    <location>
        <position position="361"/>
    </location>
</feature>
<feature type="splice variant" id="VSP_061269" description="In isoform 2.">
    <location>
        <begin position="1"/>
        <end position="169"/>
    </location>
</feature>
<gene>
    <name evidence="5" type="primary">Atg4b</name>
</gene>
<organism>
    <name type="scientific">Rattus norvegicus</name>
    <name type="common">Rat</name>
    <dbReference type="NCBI Taxonomy" id="10116"/>
    <lineage>
        <taxon>Eukaryota</taxon>
        <taxon>Metazoa</taxon>
        <taxon>Chordata</taxon>
        <taxon>Craniata</taxon>
        <taxon>Vertebrata</taxon>
        <taxon>Euteleostomi</taxon>
        <taxon>Mammalia</taxon>
        <taxon>Eutheria</taxon>
        <taxon>Euarchontoglires</taxon>
        <taxon>Glires</taxon>
        <taxon>Rodentia</taxon>
        <taxon>Myomorpha</taxon>
        <taxon>Muroidea</taxon>
        <taxon>Muridae</taxon>
        <taxon>Murinae</taxon>
        <taxon>Rattus</taxon>
    </lineage>
</organism>
<comment type="function">
    <text evidence="2">Cysteine protease that plays a key role in autophagy by mediating both proteolytic activation and delipidation of ATG8 family proteins. Required for canonical autophagy (macroautophagy), non-canonical autophagy as well as for mitophagy. The protease activity is required for proteolytic activation of ATG8 family proteins: cleaves the C-terminal amino acid of ATG8 proteins MAP1LC3A, MAP1LC3B, MAP1LC3C, GABARAPL1, GABARAPL2 and GABARAP, to reveal a C-terminal glycine. Exposure of the glycine at the C-terminus is essential for ATG8 proteins conjugation to phosphatidylethanolamine (PE) and insertion to membranes, which is necessary for autophagy. Protease activity is also required to counteract formation of high-molecular weight conjugates of ATG8 proteins (ATG8ylation): acts as a deubiquitinating-like enzyme that removes ATG8 conjugated to other proteins, such as ATG3. In addition to the protease activity, also mediates delipidation of ATG8 family proteins. Catalyzes delipidation of PE-conjugated forms of ATG8 proteins during macroautophagy. Also involved in non-canonical autophagy, a parallel pathway involving conjugation of ATG8 proteins to single membranes at endolysosomal compartments, by catalyzing delipidation of ATG8 proteins conjugated to phosphatidylserine (PS). Compared to other members of the family (ATG4A, ATG4C or ATG4C), constitutes the major protein for proteolytic activation of ATG8 proteins, while it displays weaker delipidation activity than other ATG4 paralogs. Involved in phagophore growth during mitophagy independently of its protease activity and of ATG8 proteins: acts by regulating ATG9A trafficking to mitochondria and promoting phagophore-endoplasmic reticulum contacts during the lipid transfer phase of mitophagy.</text>
</comment>
<comment type="catalytic activity">
    <reaction evidence="2">
        <text>[protein]-C-terminal L-amino acid-glycyl-phosphatidylethanolamide + H2O = [protein]-C-terminal L-amino acid-glycine + a 1,2-diacyl-sn-glycero-3-phosphoethanolamine</text>
        <dbReference type="Rhea" id="RHEA:67548"/>
        <dbReference type="Rhea" id="RHEA-COMP:17323"/>
        <dbReference type="Rhea" id="RHEA-COMP:17324"/>
        <dbReference type="ChEBI" id="CHEBI:15377"/>
        <dbReference type="ChEBI" id="CHEBI:64612"/>
        <dbReference type="ChEBI" id="CHEBI:172940"/>
        <dbReference type="ChEBI" id="CHEBI:172941"/>
    </reaction>
    <physiologicalReaction direction="left-to-right" evidence="2">
        <dbReference type="Rhea" id="RHEA:67549"/>
    </physiologicalReaction>
</comment>
<comment type="catalytic activity">
    <reaction evidence="2">
        <text>[protein]-C-terminal L-amino acid-glycyl-phosphatidylserine + H2O = [protein]-C-terminal L-amino acid-glycine + a 1,2-diacyl-sn-glycero-3-phospho-L-serine</text>
        <dbReference type="Rhea" id="RHEA:67576"/>
        <dbReference type="Rhea" id="RHEA-COMP:17324"/>
        <dbReference type="Rhea" id="RHEA-COMP:17326"/>
        <dbReference type="ChEBI" id="CHEBI:15377"/>
        <dbReference type="ChEBI" id="CHEBI:57262"/>
        <dbReference type="ChEBI" id="CHEBI:172940"/>
        <dbReference type="ChEBI" id="CHEBI:172942"/>
    </reaction>
    <physiologicalReaction direction="left-to-right" evidence="2">
        <dbReference type="Rhea" id="RHEA:67577"/>
    </physiologicalReaction>
</comment>
<comment type="activity regulation">
    <text evidence="2">Inhibited by N-ethylmaleimide. Redox-regulated during autophagy since reducing conditions activate ATG4A whereas an oxidizing environment such as the presence of H(2)O(2) inhibits its activity. The cysteine protease activity compounds is inhibited by styrylquinoline compounds 4-28 and LV-320.</text>
</comment>
<comment type="subunit">
    <text evidence="1 2">Interacts with PFKP; promoting phosphorylation of ATG4B at Ser-34 (By similarity). Interacts with GBP7 (By similarity).</text>
</comment>
<comment type="subcellular location">
    <subcellularLocation>
        <location evidence="2">Cytoplasm</location>
    </subcellularLocation>
    <subcellularLocation>
        <location evidence="2">Cytoplasm</location>
        <location evidence="2">Cytosol</location>
    </subcellularLocation>
    <subcellularLocation>
        <location evidence="2">Cytoplasmic vesicle</location>
        <location evidence="2">Autophagosome</location>
    </subcellularLocation>
    <subcellularLocation>
        <location evidence="2">Endoplasmic reticulum</location>
    </subcellularLocation>
    <subcellularLocation>
        <location evidence="2">Mitochondrion</location>
    </subcellularLocation>
    <text evidence="2">Mainly localizes to the cytoplasm, including cytosol. A samll potion localizes to mitochondria; phosphorylation at Ser-34 promotes localization to mitochondria.</text>
</comment>
<comment type="alternative products">
    <event type="alternative splicing"/>
    <isoform>
        <id>A0A0G2QC33-1</id>
        <name>1</name>
        <sequence type="displayed"/>
    </isoform>
    <isoform>
        <id>A0A0G2QC33-2</id>
        <name>2</name>
        <sequence type="described" ref="VSP_061269"/>
    </isoform>
</comment>
<comment type="domain">
    <text evidence="2">The LIR motif (LC3-interacting region) is required for the interaction with ATG8 family proteins MAP1LC3A, MAP1LC3B, MAP1LC3C and GABARAPL1. Required for proteolytic activation and delipidation of ATG8 proteins.</text>
</comment>
<comment type="PTM">
    <text evidence="2">Phosphorylation at Ser-383 and Ser-392 promotes autophagy by increasing protein delipidation activity without affecting proteolytic activation of ATG8 proteins. Phosphorylation at Ser-316 by ULK1 inhibits autophagy by decreasing both proteolytic activation and delipidation activities. Phosphorylation at Ser-316 is dephosphorylated by protein phosphatase 2A (PP2A). Phosphorylation at Ser-34 by AKT2 promotes its hydrolase activity, leading to increased proteolytic activation and delipidation of ATG8 family proteins. Phosphorylation at Ser-34 by AKT1 promotes mitochondrial localization and inhibition of the F1F0-ATP synthase activity, leading to elevation of mitochondrial reactive oxygen species (ROS).</text>
</comment>
<comment type="PTM">
    <text evidence="2">Ubiquitinated by RNF5, leading to its degradation by the proteasome.</text>
</comment>
<comment type="PTM">
    <text evidence="3">S-nitrosylation in response to high glucose decreases both proteolytic activation and delipidation activities.</text>
</comment>
<comment type="PTM">
    <text evidence="2">O-glycosylated by OGT, leading to increase protease activity, thereby promoting the proteolytic activation of ATG8 family proteins.</text>
</comment>
<comment type="PTM">
    <text evidence="2">Forms reversible intrachain disulfide bonds in response to oxidative stress. Forms interchain disulfide bonds, leading to formation of homooligomers in response to oxidation.</text>
</comment>
<comment type="similarity">
    <text evidence="4">Belongs to the peptidase C54 family.</text>
</comment>